<name>UNG_ACIAD</name>
<evidence type="ECO:0000255" key="1">
    <source>
        <dbReference type="HAMAP-Rule" id="MF_00148"/>
    </source>
</evidence>
<accession>Q6F9Y2</accession>
<reference key="1">
    <citation type="journal article" date="2004" name="Nucleic Acids Res.">
        <title>Unique features revealed by the genome sequence of Acinetobacter sp. ADP1, a versatile and naturally transformation competent bacterium.</title>
        <authorList>
            <person name="Barbe V."/>
            <person name="Vallenet D."/>
            <person name="Fonknechten N."/>
            <person name="Kreimeyer A."/>
            <person name="Oztas S."/>
            <person name="Labarre L."/>
            <person name="Cruveiller S."/>
            <person name="Robert C."/>
            <person name="Duprat S."/>
            <person name="Wincker P."/>
            <person name="Ornston L.N."/>
            <person name="Weissenbach J."/>
            <person name="Marliere P."/>
            <person name="Cohen G.N."/>
            <person name="Medigue C."/>
        </authorList>
    </citation>
    <scope>NUCLEOTIDE SEQUENCE [LARGE SCALE GENOMIC DNA]</scope>
    <source>
        <strain>ATCC 33305 / BD413 / ADP1</strain>
    </source>
</reference>
<feature type="chain" id="PRO_0000176054" description="Uracil-DNA glycosylase">
    <location>
        <begin position="1"/>
        <end position="237"/>
    </location>
</feature>
<feature type="active site" description="Proton acceptor" evidence="1">
    <location>
        <position position="77"/>
    </location>
</feature>
<dbReference type="EC" id="3.2.2.27" evidence="1"/>
<dbReference type="EMBL" id="CR543861">
    <property type="protein sequence ID" value="CAG69131.1"/>
    <property type="molecule type" value="Genomic_DNA"/>
</dbReference>
<dbReference type="RefSeq" id="WP_004928156.1">
    <property type="nucleotide sequence ID" value="NC_005966.1"/>
</dbReference>
<dbReference type="SMR" id="Q6F9Y2"/>
<dbReference type="STRING" id="202950.GCA_001485005_00055"/>
<dbReference type="GeneID" id="45234668"/>
<dbReference type="KEGG" id="aci:ACIAD2352"/>
<dbReference type="eggNOG" id="COG0692">
    <property type="taxonomic scope" value="Bacteria"/>
</dbReference>
<dbReference type="HOGENOM" id="CLU_032162_3_0_6"/>
<dbReference type="OrthoDB" id="9804372at2"/>
<dbReference type="BioCyc" id="ASP62977:ACIAD_RS10755-MONOMER"/>
<dbReference type="Proteomes" id="UP000000430">
    <property type="component" value="Chromosome"/>
</dbReference>
<dbReference type="GO" id="GO:0005737">
    <property type="term" value="C:cytoplasm"/>
    <property type="evidence" value="ECO:0007669"/>
    <property type="project" value="UniProtKB-SubCell"/>
</dbReference>
<dbReference type="GO" id="GO:0004844">
    <property type="term" value="F:uracil DNA N-glycosylase activity"/>
    <property type="evidence" value="ECO:0007669"/>
    <property type="project" value="UniProtKB-UniRule"/>
</dbReference>
<dbReference type="GO" id="GO:0097510">
    <property type="term" value="P:base-excision repair, AP site formation via deaminated base removal"/>
    <property type="evidence" value="ECO:0007669"/>
    <property type="project" value="TreeGrafter"/>
</dbReference>
<dbReference type="CDD" id="cd10027">
    <property type="entry name" value="UDG-F1-like"/>
    <property type="match status" value="1"/>
</dbReference>
<dbReference type="FunFam" id="3.40.470.10:FF:000001">
    <property type="entry name" value="Uracil-DNA glycosylase"/>
    <property type="match status" value="1"/>
</dbReference>
<dbReference type="Gene3D" id="3.40.470.10">
    <property type="entry name" value="Uracil-DNA glycosylase-like domain"/>
    <property type="match status" value="1"/>
</dbReference>
<dbReference type="HAMAP" id="MF_00148">
    <property type="entry name" value="UDG"/>
    <property type="match status" value="1"/>
</dbReference>
<dbReference type="InterPro" id="IPR002043">
    <property type="entry name" value="UDG_fam1"/>
</dbReference>
<dbReference type="InterPro" id="IPR018085">
    <property type="entry name" value="Ura-DNA_Glyclase_AS"/>
</dbReference>
<dbReference type="InterPro" id="IPR005122">
    <property type="entry name" value="Uracil-DNA_glycosylase-like"/>
</dbReference>
<dbReference type="InterPro" id="IPR036895">
    <property type="entry name" value="Uracil-DNA_glycosylase-like_sf"/>
</dbReference>
<dbReference type="NCBIfam" id="NF003588">
    <property type="entry name" value="PRK05254.1-1"/>
    <property type="match status" value="1"/>
</dbReference>
<dbReference type="NCBIfam" id="NF003589">
    <property type="entry name" value="PRK05254.1-2"/>
    <property type="match status" value="1"/>
</dbReference>
<dbReference type="NCBIfam" id="NF003591">
    <property type="entry name" value="PRK05254.1-4"/>
    <property type="match status" value="1"/>
</dbReference>
<dbReference type="NCBIfam" id="NF003592">
    <property type="entry name" value="PRK05254.1-5"/>
    <property type="match status" value="1"/>
</dbReference>
<dbReference type="NCBIfam" id="TIGR00628">
    <property type="entry name" value="ung"/>
    <property type="match status" value="1"/>
</dbReference>
<dbReference type="PANTHER" id="PTHR11264">
    <property type="entry name" value="URACIL-DNA GLYCOSYLASE"/>
    <property type="match status" value="1"/>
</dbReference>
<dbReference type="PANTHER" id="PTHR11264:SF0">
    <property type="entry name" value="URACIL-DNA GLYCOSYLASE"/>
    <property type="match status" value="1"/>
</dbReference>
<dbReference type="Pfam" id="PF03167">
    <property type="entry name" value="UDG"/>
    <property type="match status" value="1"/>
</dbReference>
<dbReference type="SMART" id="SM00986">
    <property type="entry name" value="UDG"/>
    <property type="match status" value="1"/>
</dbReference>
<dbReference type="SMART" id="SM00987">
    <property type="entry name" value="UreE_C"/>
    <property type="match status" value="1"/>
</dbReference>
<dbReference type="SUPFAM" id="SSF52141">
    <property type="entry name" value="Uracil-DNA glycosylase-like"/>
    <property type="match status" value="1"/>
</dbReference>
<dbReference type="PROSITE" id="PS00130">
    <property type="entry name" value="U_DNA_GLYCOSYLASE"/>
    <property type="match status" value="1"/>
</dbReference>
<proteinExistence type="inferred from homology"/>
<comment type="function">
    <text evidence="1">Excises uracil residues from the DNA which can arise as a result of misincorporation of dUMP residues by DNA polymerase or due to deamination of cytosine.</text>
</comment>
<comment type="catalytic activity">
    <reaction evidence="1">
        <text>Hydrolyzes single-stranded DNA or mismatched double-stranded DNA and polynucleotides, releasing free uracil.</text>
        <dbReference type="EC" id="3.2.2.27"/>
    </reaction>
</comment>
<comment type="subcellular location">
    <subcellularLocation>
        <location evidence="1">Cytoplasm</location>
    </subcellularLocation>
</comment>
<comment type="similarity">
    <text evidence="1">Belongs to the uracil-DNA glycosylase (UDG) superfamily. UNG family.</text>
</comment>
<keyword id="KW-0963">Cytoplasm</keyword>
<keyword id="KW-0227">DNA damage</keyword>
<keyword id="KW-0234">DNA repair</keyword>
<keyword id="KW-0378">Hydrolase</keyword>
<organism>
    <name type="scientific">Acinetobacter baylyi (strain ATCC 33305 / BD413 / ADP1)</name>
    <dbReference type="NCBI Taxonomy" id="62977"/>
    <lineage>
        <taxon>Bacteria</taxon>
        <taxon>Pseudomonadati</taxon>
        <taxon>Pseudomonadota</taxon>
        <taxon>Gammaproteobacteria</taxon>
        <taxon>Moraxellales</taxon>
        <taxon>Moraxellaceae</taxon>
        <taxon>Acinetobacter</taxon>
    </lineage>
</organism>
<protein>
    <recommendedName>
        <fullName evidence="1">Uracil-DNA glycosylase</fullName>
        <shortName evidence="1">UDG</shortName>
        <ecNumber evidence="1">3.2.2.27</ecNumber>
    </recommendedName>
</protein>
<sequence length="237" mass="26843">MQLTEQQHDKLSKVQLDESWKHSLAEFLVSSRMDELRQFLIEQKNQDKVIYPPSKQIFNALNTTPLSAVKVVILGQDPYHGPNQANGLSFSVQKGIVLPPSLRNIFHELNTDLGIPVPKHGDLTKWADQGVLLLNSVLTVEAGQPTSHQKRGWEQFTDSIIDVLNEQREHVVFILWGAYAQRKGQRIDREKHLVLKAAHPSPLAANRGGFFGCKVFSKTNNYLKQHGIEPIDWQLDA</sequence>
<gene>
    <name evidence="1" type="primary">ung</name>
    <name type="ordered locus">ACIAD2352</name>
</gene>